<accession>B0CGG7</accession>
<evidence type="ECO:0000255" key="1">
    <source>
        <dbReference type="HAMAP-Rule" id="MF_00022"/>
    </source>
</evidence>
<gene>
    <name evidence="1" type="primary">gltX1</name>
    <name type="ordered locus">BSUIS_A1059</name>
</gene>
<sequence>MTVTVRFAPSPTGYIHIGNTRTALSNWLYASKNNGKFILRYDDTDVERSKDEYAQAIAVDLDWLGVRPDRVEYQSKRFDIYAKAVEKLKTAGLLYACYETADELERRRKLRLARRLPPVYGREALKLTDAEKAALEAEGRKPHWRFLLPNFESDPFATQRTEVHWDDLVRGPQTVDLASMSDPILVREDGTYLYTLPSVVDDIDMGVTHIIRGDDHVTNTGVQISIFKALGATPPVFGHHNLLTTISGEGLSKRTGALSVGSLREAGYEPMAVASLAILIGTSESVTAAPDMAALAEHFDLASISKSSAKFDPSELDALNRSLLHEMPFEKAKPRLEALGICGAKAESFWLAVRGNLDRFSDVSHWWQVVSGDLPEAPDLSGEDRDFVRHAFDLLPPEPWNGQTWKSWTEAVKSATGRKGKNLFMPLRLALTGQAHGPELADLLVLVGLERTKSRRP</sequence>
<protein>
    <recommendedName>
        <fullName evidence="1">Glutamate--tRNA ligase 1</fullName>
        <ecNumber evidence="1">6.1.1.17</ecNumber>
    </recommendedName>
    <alternativeName>
        <fullName evidence="1">Glutamyl-tRNA synthetase 1</fullName>
        <shortName evidence="1">GluRS 1</shortName>
    </alternativeName>
</protein>
<reference key="1">
    <citation type="submission" date="2007-12" db="EMBL/GenBank/DDBJ databases">
        <title>Brucella suis ATCC 23445 whole genome shotgun sequencing project.</title>
        <authorList>
            <person name="Setubal J.C."/>
            <person name="Bowns C."/>
            <person name="Boyle S."/>
            <person name="Crasta O.R."/>
            <person name="Czar M.J."/>
            <person name="Dharmanolla C."/>
            <person name="Gillespie J.J."/>
            <person name="Kenyon R.W."/>
            <person name="Lu J."/>
            <person name="Mane S."/>
            <person name="Mohapatra S."/>
            <person name="Nagrani S."/>
            <person name="Purkayastha A."/>
            <person name="Rajasimha H.K."/>
            <person name="Shallom J.M."/>
            <person name="Shallom S."/>
            <person name="Shukla M."/>
            <person name="Snyder E.E."/>
            <person name="Sobral B.W."/>
            <person name="Wattam A.R."/>
            <person name="Will R."/>
            <person name="Williams K."/>
            <person name="Yoo H."/>
            <person name="Bruce D."/>
            <person name="Detter C."/>
            <person name="Munk C."/>
            <person name="Brettin T.S."/>
        </authorList>
    </citation>
    <scope>NUCLEOTIDE SEQUENCE [LARGE SCALE GENOMIC DNA]</scope>
    <source>
        <strain>ATCC 23445 / NCTC 10510</strain>
    </source>
</reference>
<keyword id="KW-0030">Aminoacyl-tRNA synthetase</keyword>
<keyword id="KW-0067">ATP-binding</keyword>
<keyword id="KW-0963">Cytoplasm</keyword>
<keyword id="KW-0436">Ligase</keyword>
<keyword id="KW-0547">Nucleotide-binding</keyword>
<keyword id="KW-0648">Protein biosynthesis</keyword>
<comment type="function">
    <text evidence="1">Catalyzes the attachment of glutamate to tRNA(Glu) in a two-step reaction: glutamate is first activated by ATP to form Glu-AMP and then transferred to the acceptor end of tRNA(Glu).</text>
</comment>
<comment type="catalytic activity">
    <reaction evidence="1">
        <text>tRNA(Glu) + L-glutamate + ATP = L-glutamyl-tRNA(Glu) + AMP + diphosphate</text>
        <dbReference type="Rhea" id="RHEA:23540"/>
        <dbReference type="Rhea" id="RHEA-COMP:9663"/>
        <dbReference type="Rhea" id="RHEA-COMP:9680"/>
        <dbReference type="ChEBI" id="CHEBI:29985"/>
        <dbReference type="ChEBI" id="CHEBI:30616"/>
        <dbReference type="ChEBI" id="CHEBI:33019"/>
        <dbReference type="ChEBI" id="CHEBI:78442"/>
        <dbReference type="ChEBI" id="CHEBI:78520"/>
        <dbReference type="ChEBI" id="CHEBI:456215"/>
        <dbReference type="EC" id="6.1.1.17"/>
    </reaction>
</comment>
<comment type="subunit">
    <text evidence="1">Monomer.</text>
</comment>
<comment type="subcellular location">
    <subcellularLocation>
        <location evidence="1">Cytoplasm</location>
    </subcellularLocation>
</comment>
<comment type="similarity">
    <text evidence="1">Belongs to the class-I aminoacyl-tRNA synthetase family. Glutamate--tRNA ligase type 1 subfamily.</text>
</comment>
<name>SYE1_BRUSI</name>
<organism>
    <name type="scientific">Brucella suis (strain ATCC 23445 / NCTC 10510)</name>
    <dbReference type="NCBI Taxonomy" id="470137"/>
    <lineage>
        <taxon>Bacteria</taxon>
        <taxon>Pseudomonadati</taxon>
        <taxon>Pseudomonadota</taxon>
        <taxon>Alphaproteobacteria</taxon>
        <taxon>Hyphomicrobiales</taxon>
        <taxon>Brucellaceae</taxon>
        <taxon>Brucella/Ochrobactrum group</taxon>
        <taxon>Brucella</taxon>
    </lineage>
</organism>
<feature type="chain" id="PRO_0000367627" description="Glutamate--tRNA ligase 1">
    <location>
        <begin position="1"/>
        <end position="457"/>
    </location>
</feature>
<feature type="short sequence motif" description="'HIGH' region" evidence="1">
    <location>
        <begin position="9"/>
        <end position="19"/>
    </location>
</feature>
<feature type="short sequence motif" description="'KMSKS' region" evidence="1">
    <location>
        <begin position="250"/>
        <end position="254"/>
    </location>
</feature>
<feature type="binding site" evidence="1">
    <location>
        <position position="253"/>
    </location>
    <ligand>
        <name>ATP</name>
        <dbReference type="ChEBI" id="CHEBI:30616"/>
    </ligand>
</feature>
<dbReference type="EC" id="6.1.1.17" evidence="1"/>
<dbReference type="EMBL" id="CP000911">
    <property type="protein sequence ID" value="ABY38118.1"/>
    <property type="molecule type" value="Genomic_DNA"/>
</dbReference>
<dbReference type="SMR" id="B0CGG7"/>
<dbReference type="KEGG" id="bmt:BSUIS_A1059"/>
<dbReference type="HOGENOM" id="CLU_015768_6_1_5"/>
<dbReference type="Proteomes" id="UP000008545">
    <property type="component" value="Chromosome I"/>
</dbReference>
<dbReference type="GO" id="GO:0005737">
    <property type="term" value="C:cytoplasm"/>
    <property type="evidence" value="ECO:0007669"/>
    <property type="project" value="UniProtKB-SubCell"/>
</dbReference>
<dbReference type="GO" id="GO:0005524">
    <property type="term" value="F:ATP binding"/>
    <property type="evidence" value="ECO:0007669"/>
    <property type="project" value="UniProtKB-UniRule"/>
</dbReference>
<dbReference type="GO" id="GO:0004818">
    <property type="term" value="F:glutamate-tRNA ligase activity"/>
    <property type="evidence" value="ECO:0007669"/>
    <property type="project" value="UniProtKB-UniRule"/>
</dbReference>
<dbReference type="GO" id="GO:0000049">
    <property type="term" value="F:tRNA binding"/>
    <property type="evidence" value="ECO:0007669"/>
    <property type="project" value="InterPro"/>
</dbReference>
<dbReference type="GO" id="GO:0008270">
    <property type="term" value="F:zinc ion binding"/>
    <property type="evidence" value="ECO:0007669"/>
    <property type="project" value="InterPro"/>
</dbReference>
<dbReference type="GO" id="GO:0006424">
    <property type="term" value="P:glutamyl-tRNA aminoacylation"/>
    <property type="evidence" value="ECO:0007669"/>
    <property type="project" value="UniProtKB-UniRule"/>
</dbReference>
<dbReference type="CDD" id="cd00808">
    <property type="entry name" value="GluRS_core"/>
    <property type="match status" value="1"/>
</dbReference>
<dbReference type="Gene3D" id="1.10.10.350">
    <property type="match status" value="1"/>
</dbReference>
<dbReference type="Gene3D" id="3.40.50.620">
    <property type="entry name" value="HUPs"/>
    <property type="match status" value="1"/>
</dbReference>
<dbReference type="HAMAP" id="MF_00022">
    <property type="entry name" value="Glu_tRNA_synth_type1"/>
    <property type="match status" value="1"/>
</dbReference>
<dbReference type="InterPro" id="IPR045462">
    <property type="entry name" value="aa-tRNA-synth_I_cd-bd"/>
</dbReference>
<dbReference type="InterPro" id="IPR020751">
    <property type="entry name" value="aa-tRNA-synth_I_codon-bd_sub2"/>
</dbReference>
<dbReference type="InterPro" id="IPR001412">
    <property type="entry name" value="aa-tRNA-synth_I_CS"/>
</dbReference>
<dbReference type="InterPro" id="IPR008925">
    <property type="entry name" value="aa_tRNA-synth_I_cd-bd_sf"/>
</dbReference>
<dbReference type="InterPro" id="IPR004527">
    <property type="entry name" value="Glu-tRNA-ligase_bac/mito"/>
</dbReference>
<dbReference type="InterPro" id="IPR000924">
    <property type="entry name" value="Glu/Gln-tRNA-synth"/>
</dbReference>
<dbReference type="InterPro" id="IPR020058">
    <property type="entry name" value="Glu/Gln-tRNA-synth_Ib_cat-dom"/>
</dbReference>
<dbReference type="InterPro" id="IPR049940">
    <property type="entry name" value="GluQ/Sye"/>
</dbReference>
<dbReference type="InterPro" id="IPR033910">
    <property type="entry name" value="GluRS_core"/>
</dbReference>
<dbReference type="InterPro" id="IPR014729">
    <property type="entry name" value="Rossmann-like_a/b/a_fold"/>
</dbReference>
<dbReference type="NCBIfam" id="TIGR00464">
    <property type="entry name" value="gltX_bact"/>
    <property type="match status" value="1"/>
</dbReference>
<dbReference type="PANTHER" id="PTHR43311">
    <property type="entry name" value="GLUTAMATE--TRNA LIGASE"/>
    <property type="match status" value="1"/>
</dbReference>
<dbReference type="PANTHER" id="PTHR43311:SF2">
    <property type="entry name" value="GLUTAMATE--TRNA LIGASE, MITOCHONDRIAL-RELATED"/>
    <property type="match status" value="1"/>
</dbReference>
<dbReference type="Pfam" id="PF19269">
    <property type="entry name" value="Anticodon_2"/>
    <property type="match status" value="1"/>
</dbReference>
<dbReference type="Pfam" id="PF00749">
    <property type="entry name" value="tRNA-synt_1c"/>
    <property type="match status" value="1"/>
</dbReference>
<dbReference type="PRINTS" id="PR00987">
    <property type="entry name" value="TRNASYNTHGLU"/>
</dbReference>
<dbReference type="SUPFAM" id="SSF48163">
    <property type="entry name" value="An anticodon-binding domain of class I aminoacyl-tRNA synthetases"/>
    <property type="match status" value="1"/>
</dbReference>
<dbReference type="SUPFAM" id="SSF52374">
    <property type="entry name" value="Nucleotidylyl transferase"/>
    <property type="match status" value="1"/>
</dbReference>
<dbReference type="PROSITE" id="PS00178">
    <property type="entry name" value="AA_TRNA_LIGASE_I"/>
    <property type="match status" value="1"/>
</dbReference>
<proteinExistence type="inferred from homology"/>